<evidence type="ECO:0000250" key="1"/>
<evidence type="ECO:0000255" key="2"/>
<evidence type="ECO:0000305" key="3"/>
<feature type="chain" id="PRO_0000343818" description="UPF0056 inner membrane protein MarC">
    <location>
        <begin position="1"/>
        <end position="221"/>
    </location>
</feature>
<feature type="topological domain" description="Periplasmic" evidence="2">
    <location>
        <begin position="1"/>
        <end position="7"/>
    </location>
</feature>
<feature type="transmembrane region" description="Helical" evidence="2">
    <location>
        <begin position="8"/>
        <end position="28"/>
    </location>
</feature>
<feature type="topological domain" description="Cytoplasmic" evidence="2">
    <location>
        <begin position="29"/>
        <end position="44"/>
    </location>
</feature>
<feature type="transmembrane region" description="Helical" evidence="2">
    <location>
        <begin position="45"/>
        <end position="65"/>
    </location>
</feature>
<feature type="topological domain" description="Periplasmic" evidence="2">
    <location>
        <begin position="66"/>
        <end position="68"/>
    </location>
</feature>
<feature type="transmembrane region" description="Helical" evidence="2">
    <location>
        <begin position="69"/>
        <end position="89"/>
    </location>
</feature>
<feature type="topological domain" description="Cytoplasmic" evidence="2">
    <location>
        <begin position="90"/>
        <end position="118"/>
    </location>
</feature>
<feature type="transmembrane region" description="Helical" evidence="2">
    <location>
        <begin position="119"/>
        <end position="139"/>
    </location>
</feature>
<feature type="topological domain" description="Periplasmic" evidence="2">
    <location>
        <begin position="140"/>
        <end position="154"/>
    </location>
</feature>
<feature type="transmembrane region" description="Helical" evidence="2">
    <location>
        <begin position="155"/>
        <end position="175"/>
    </location>
</feature>
<feature type="topological domain" description="Cytoplasmic" evidence="2">
    <location>
        <begin position="176"/>
        <end position="196"/>
    </location>
</feature>
<feature type="transmembrane region" description="Helical" evidence="2">
    <location>
        <begin position="197"/>
        <end position="217"/>
    </location>
</feature>
<feature type="topological domain" description="Periplasmic" evidence="2">
    <location>
        <begin position="218"/>
        <end position="221"/>
    </location>
</feature>
<sequence length="221" mass="23590">MLDLFKAIGLGLVVLLPLANPLTTVALFLGLAGNMSSAERNRQSLMASVYVFAIMMVAYYAGQLVMDTFGISIPGLRIAGGLIVAFIGFRMLFPQQKAIDSPEAKSKSEELEDEPSANIAFVPLAMPSTAGPGTIAMIISSASTVRQSSTFADWVLMVAPPLIFFLVAVILWGSLRSSGAIMRLVGKGGIEAISRLMGFLLVCMGVQFIINGILEIIKTYH</sequence>
<gene>
    <name type="primary">marC</name>
    <name type="ordered locus">Ecok1_14540</name>
    <name type="ORF">APECO1_647</name>
</gene>
<keyword id="KW-0997">Cell inner membrane</keyword>
<keyword id="KW-1003">Cell membrane</keyword>
<keyword id="KW-0472">Membrane</keyword>
<keyword id="KW-1185">Reference proteome</keyword>
<keyword id="KW-0812">Transmembrane</keyword>
<keyword id="KW-1133">Transmembrane helix</keyword>
<organism>
    <name type="scientific">Escherichia coli O1:K1 / APEC</name>
    <dbReference type="NCBI Taxonomy" id="405955"/>
    <lineage>
        <taxon>Bacteria</taxon>
        <taxon>Pseudomonadati</taxon>
        <taxon>Pseudomonadota</taxon>
        <taxon>Gammaproteobacteria</taxon>
        <taxon>Enterobacterales</taxon>
        <taxon>Enterobacteriaceae</taxon>
        <taxon>Escherichia</taxon>
    </lineage>
</organism>
<proteinExistence type="inferred from homology"/>
<dbReference type="EMBL" id="CP000468">
    <property type="protein sequence ID" value="ABJ00948.1"/>
    <property type="molecule type" value="Genomic_DNA"/>
</dbReference>
<dbReference type="RefSeq" id="WP_000885042.1">
    <property type="nucleotide sequence ID" value="NZ_CADILS010000002.1"/>
</dbReference>
<dbReference type="KEGG" id="ecv:APECO1_647"/>
<dbReference type="HOGENOM" id="CLU_079909_2_0_6"/>
<dbReference type="Proteomes" id="UP000008216">
    <property type="component" value="Chromosome"/>
</dbReference>
<dbReference type="GO" id="GO:0005886">
    <property type="term" value="C:plasma membrane"/>
    <property type="evidence" value="ECO:0007669"/>
    <property type="project" value="UniProtKB-SubCell"/>
</dbReference>
<dbReference type="InterPro" id="IPR002771">
    <property type="entry name" value="Multi_antbiot-R_MarC"/>
</dbReference>
<dbReference type="NCBIfam" id="TIGR00427">
    <property type="entry name" value="NAAT family transporter"/>
    <property type="match status" value="1"/>
</dbReference>
<dbReference type="NCBIfam" id="NF008228">
    <property type="entry name" value="PRK10995.1"/>
    <property type="match status" value="1"/>
</dbReference>
<dbReference type="PANTHER" id="PTHR33508:SF2">
    <property type="entry name" value="UPF0056 INNER MEMBRANE PROTEIN MARC"/>
    <property type="match status" value="1"/>
</dbReference>
<dbReference type="PANTHER" id="PTHR33508">
    <property type="entry name" value="UPF0056 MEMBRANE PROTEIN YHCE"/>
    <property type="match status" value="1"/>
</dbReference>
<dbReference type="Pfam" id="PF01914">
    <property type="entry name" value="MarC"/>
    <property type="match status" value="1"/>
</dbReference>
<accession>A1ABA8</accession>
<reference key="1">
    <citation type="journal article" date="2007" name="J. Bacteriol.">
        <title>The genome sequence of avian pathogenic Escherichia coli strain O1:K1:H7 shares strong similarities with human extraintestinal pathogenic E. coli genomes.</title>
        <authorList>
            <person name="Johnson T.J."/>
            <person name="Kariyawasam S."/>
            <person name="Wannemuehler Y."/>
            <person name="Mangiamele P."/>
            <person name="Johnson S.J."/>
            <person name="Doetkott C."/>
            <person name="Skyberg J.A."/>
            <person name="Lynne A.M."/>
            <person name="Johnson J.R."/>
            <person name="Nolan L.K."/>
        </authorList>
    </citation>
    <scope>NUCLEOTIDE SEQUENCE [LARGE SCALE GENOMIC DNA]</scope>
</reference>
<protein>
    <recommendedName>
        <fullName>UPF0056 inner membrane protein MarC</fullName>
    </recommendedName>
</protein>
<name>MARC_ECOK1</name>
<comment type="subcellular location">
    <subcellularLocation>
        <location evidence="1">Cell inner membrane</location>
        <topology evidence="1">Multi-pass membrane protein</topology>
    </subcellularLocation>
</comment>
<comment type="similarity">
    <text evidence="3">Belongs to the UPF0056 (MarC) family.</text>
</comment>